<comment type="function">
    <text evidence="1">Catalyzes the ATP-dependent phosphorylation of N-acetyl-L-glutamate.</text>
</comment>
<comment type="catalytic activity">
    <reaction evidence="1">
        <text>N-acetyl-L-glutamate + ATP = N-acetyl-L-glutamyl 5-phosphate + ADP</text>
        <dbReference type="Rhea" id="RHEA:14629"/>
        <dbReference type="ChEBI" id="CHEBI:30616"/>
        <dbReference type="ChEBI" id="CHEBI:44337"/>
        <dbReference type="ChEBI" id="CHEBI:57936"/>
        <dbReference type="ChEBI" id="CHEBI:456216"/>
        <dbReference type="EC" id="2.7.2.8"/>
    </reaction>
</comment>
<comment type="pathway">
    <text evidence="1">Amino-acid biosynthesis; L-arginine biosynthesis; N(2)-acetyl-L-ornithine from L-glutamate: step 2/4.</text>
</comment>
<comment type="subcellular location">
    <subcellularLocation>
        <location evidence="1">Cytoplasm</location>
    </subcellularLocation>
</comment>
<comment type="similarity">
    <text evidence="1">Belongs to the acetylglutamate kinase family. ArgB subfamily.</text>
</comment>
<organism>
    <name type="scientific">Mycolicibacterium smegmatis (strain ATCC 700084 / mc(2)155)</name>
    <name type="common">Mycobacterium smegmatis</name>
    <dbReference type="NCBI Taxonomy" id="246196"/>
    <lineage>
        <taxon>Bacteria</taxon>
        <taxon>Bacillati</taxon>
        <taxon>Actinomycetota</taxon>
        <taxon>Actinomycetes</taxon>
        <taxon>Mycobacteriales</taxon>
        <taxon>Mycobacteriaceae</taxon>
        <taxon>Mycolicibacterium</taxon>
    </lineage>
</organism>
<name>ARGB_MYCS2</name>
<proteinExistence type="evidence at protein level"/>
<gene>
    <name evidence="1" type="primary">argB</name>
    <name type="ordered locus">MSMEG_3774</name>
    <name type="ordered locus">MSMEI_3685</name>
</gene>
<accession>A0QYT0</accession>
<accession>I7GC40</accession>
<feature type="chain" id="PRO_0000335647" description="Acetylglutamate kinase">
    <location>
        <begin position="1"/>
        <end position="293"/>
    </location>
</feature>
<feature type="binding site" evidence="1">
    <location>
        <begin position="68"/>
        <end position="69"/>
    </location>
    <ligand>
        <name>substrate</name>
    </ligand>
</feature>
<feature type="binding site" evidence="1">
    <location>
        <position position="90"/>
    </location>
    <ligand>
        <name>substrate</name>
    </ligand>
</feature>
<feature type="binding site" evidence="1">
    <location>
        <position position="189"/>
    </location>
    <ligand>
        <name>substrate</name>
    </ligand>
</feature>
<feature type="site" description="Transition state stabilizer" evidence="1">
    <location>
        <position position="33"/>
    </location>
</feature>
<feature type="site" description="Transition state stabilizer" evidence="1">
    <location>
        <position position="250"/>
    </location>
</feature>
<protein>
    <recommendedName>
        <fullName evidence="1">Acetylglutamate kinase</fullName>
        <ecNumber evidence="1">2.7.2.8</ecNumber>
    </recommendedName>
    <alternativeName>
        <fullName evidence="1">N-acetyl-L-glutamate 5-phosphotransferase</fullName>
    </alternativeName>
    <alternativeName>
        <fullName evidence="1">NAG kinase</fullName>
        <shortName evidence="1">NAGK</shortName>
    </alternativeName>
</protein>
<reference key="1">
    <citation type="submission" date="2006-10" db="EMBL/GenBank/DDBJ databases">
        <authorList>
            <person name="Fleischmann R.D."/>
            <person name="Dodson R.J."/>
            <person name="Haft D.H."/>
            <person name="Merkel J.S."/>
            <person name="Nelson W.C."/>
            <person name="Fraser C.M."/>
        </authorList>
    </citation>
    <scope>NUCLEOTIDE SEQUENCE [LARGE SCALE GENOMIC DNA]</scope>
    <source>
        <strain>ATCC 700084 / mc(2)155</strain>
    </source>
</reference>
<reference key="2">
    <citation type="journal article" date="2007" name="Genome Biol.">
        <title>Interrupted coding sequences in Mycobacterium smegmatis: authentic mutations or sequencing errors?</title>
        <authorList>
            <person name="Deshayes C."/>
            <person name="Perrodou E."/>
            <person name="Gallien S."/>
            <person name="Euphrasie D."/>
            <person name="Schaeffer C."/>
            <person name="Van-Dorsselaer A."/>
            <person name="Poch O."/>
            <person name="Lecompte O."/>
            <person name="Reyrat J.-M."/>
        </authorList>
    </citation>
    <scope>NUCLEOTIDE SEQUENCE [LARGE SCALE GENOMIC DNA]</scope>
    <source>
        <strain>ATCC 700084 / mc(2)155</strain>
    </source>
</reference>
<reference key="3">
    <citation type="journal article" date="2009" name="Genome Res.">
        <title>Ortho-proteogenomics: multiple proteomes investigation through orthology and a new MS-based protocol.</title>
        <authorList>
            <person name="Gallien S."/>
            <person name="Perrodou E."/>
            <person name="Carapito C."/>
            <person name="Deshayes C."/>
            <person name="Reyrat J.-M."/>
            <person name="Van Dorsselaer A."/>
            <person name="Poch O."/>
            <person name="Schaeffer C."/>
            <person name="Lecompte O."/>
        </authorList>
    </citation>
    <scope>NUCLEOTIDE SEQUENCE [LARGE SCALE GENOMIC DNA]</scope>
    <scope>IDENTIFICATION BY MASS SPECTROMETRY [LARGE SCALE ANALYSIS]</scope>
    <source>
        <strain>ATCC 700084 / mc(2)155</strain>
    </source>
</reference>
<keyword id="KW-0028">Amino-acid biosynthesis</keyword>
<keyword id="KW-0055">Arginine biosynthesis</keyword>
<keyword id="KW-0067">ATP-binding</keyword>
<keyword id="KW-0963">Cytoplasm</keyword>
<keyword id="KW-0418">Kinase</keyword>
<keyword id="KW-0547">Nucleotide-binding</keyword>
<keyword id="KW-1185">Reference proteome</keyword>
<keyword id="KW-0808">Transferase</keyword>
<evidence type="ECO:0000255" key="1">
    <source>
        <dbReference type="HAMAP-Rule" id="MF_00082"/>
    </source>
</evidence>
<sequence>MSTPSIDRGFKADVLASALPWLKQLHGKIVVVKYGGNAMTDDVLKAAFAADMVFLRNCGIHPVVVHGGGPQISAMLKRLGIEGDFKGGFRVTTPEVLDVARMVLFGQVGRELVNLINAHGPYAVGVTGEDAQLFTAVRRNVTVDGVATDIGLVGDVEHVNAGSLLDLIAAGRIPVVSTIAPDADGVVHNINADTAAAALAEALGAEKLVMLTDVEGLYTDWPDRTSLVSEIDTGALTQLLPKLESGMVPKIEACLRAVNGGVPSAHVIDGRVEHCVLVELFTDEGTGTKVVAQ</sequence>
<dbReference type="EC" id="2.7.2.8" evidence="1"/>
<dbReference type="EMBL" id="CP000480">
    <property type="protein sequence ID" value="ABK73548.1"/>
    <property type="molecule type" value="Genomic_DNA"/>
</dbReference>
<dbReference type="EMBL" id="CP001663">
    <property type="protein sequence ID" value="AFP40144.1"/>
    <property type="molecule type" value="Genomic_DNA"/>
</dbReference>
<dbReference type="RefSeq" id="WP_003895218.1">
    <property type="nucleotide sequence ID" value="NZ_SIJM01000005.1"/>
</dbReference>
<dbReference type="RefSeq" id="YP_888068.1">
    <property type="nucleotide sequence ID" value="NC_008596.1"/>
</dbReference>
<dbReference type="SMR" id="A0QYT0"/>
<dbReference type="STRING" id="246196.MSMEG_3774"/>
<dbReference type="PaxDb" id="246196-MSMEI_3685"/>
<dbReference type="GeneID" id="93458516"/>
<dbReference type="KEGG" id="msb:LJ00_18750"/>
<dbReference type="KEGG" id="msg:MSMEI_3685"/>
<dbReference type="KEGG" id="msm:MSMEG_3774"/>
<dbReference type="PATRIC" id="fig|246196.19.peg.3713"/>
<dbReference type="eggNOG" id="COG0548">
    <property type="taxonomic scope" value="Bacteria"/>
</dbReference>
<dbReference type="OrthoDB" id="9803155at2"/>
<dbReference type="UniPathway" id="UPA00068">
    <property type="reaction ID" value="UER00107"/>
</dbReference>
<dbReference type="Proteomes" id="UP000000757">
    <property type="component" value="Chromosome"/>
</dbReference>
<dbReference type="Proteomes" id="UP000006158">
    <property type="component" value="Chromosome"/>
</dbReference>
<dbReference type="GO" id="GO:0005737">
    <property type="term" value="C:cytoplasm"/>
    <property type="evidence" value="ECO:0007669"/>
    <property type="project" value="UniProtKB-SubCell"/>
</dbReference>
<dbReference type="GO" id="GO:0003991">
    <property type="term" value="F:acetylglutamate kinase activity"/>
    <property type="evidence" value="ECO:0007669"/>
    <property type="project" value="UniProtKB-UniRule"/>
</dbReference>
<dbReference type="GO" id="GO:0005524">
    <property type="term" value="F:ATP binding"/>
    <property type="evidence" value="ECO:0007669"/>
    <property type="project" value="UniProtKB-UniRule"/>
</dbReference>
<dbReference type="GO" id="GO:0042450">
    <property type="term" value="P:arginine biosynthetic process via ornithine"/>
    <property type="evidence" value="ECO:0007669"/>
    <property type="project" value="UniProtKB-UniRule"/>
</dbReference>
<dbReference type="GO" id="GO:0006526">
    <property type="term" value="P:L-arginine biosynthetic process"/>
    <property type="evidence" value="ECO:0007669"/>
    <property type="project" value="UniProtKB-UniPathway"/>
</dbReference>
<dbReference type="CDD" id="cd04250">
    <property type="entry name" value="AAK_NAGK-C"/>
    <property type="match status" value="1"/>
</dbReference>
<dbReference type="FunFam" id="3.40.1160.10:FF:000004">
    <property type="entry name" value="Acetylglutamate kinase"/>
    <property type="match status" value="1"/>
</dbReference>
<dbReference type="Gene3D" id="3.40.1160.10">
    <property type="entry name" value="Acetylglutamate kinase-like"/>
    <property type="match status" value="1"/>
</dbReference>
<dbReference type="HAMAP" id="MF_00082">
    <property type="entry name" value="ArgB"/>
    <property type="match status" value="1"/>
</dbReference>
<dbReference type="InterPro" id="IPR036393">
    <property type="entry name" value="AceGlu_kinase-like_sf"/>
</dbReference>
<dbReference type="InterPro" id="IPR004662">
    <property type="entry name" value="AcgluKinase_fam"/>
</dbReference>
<dbReference type="InterPro" id="IPR037528">
    <property type="entry name" value="ArgB"/>
</dbReference>
<dbReference type="InterPro" id="IPR001048">
    <property type="entry name" value="Asp/Glu/Uridylate_kinase"/>
</dbReference>
<dbReference type="InterPro" id="IPR001057">
    <property type="entry name" value="Glu/AcGlu_kinase"/>
</dbReference>
<dbReference type="InterPro" id="IPR041727">
    <property type="entry name" value="NAGK-C"/>
</dbReference>
<dbReference type="NCBIfam" id="TIGR00761">
    <property type="entry name" value="argB"/>
    <property type="match status" value="1"/>
</dbReference>
<dbReference type="PANTHER" id="PTHR23342">
    <property type="entry name" value="N-ACETYLGLUTAMATE SYNTHASE"/>
    <property type="match status" value="1"/>
</dbReference>
<dbReference type="PANTHER" id="PTHR23342:SF0">
    <property type="entry name" value="N-ACETYLGLUTAMATE SYNTHASE, MITOCHONDRIAL"/>
    <property type="match status" value="1"/>
</dbReference>
<dbReference type="Pfam" id="PF00696">
    <property type="entry name" value="AA_kinase"/>
    <property type="match status" value="1"/>
</dbReference>
<dbReference type="PIRSF" id="PIRSF000728">
    <property type="entry name" value="NAGK"/>
    <property type="match status" value="1"/>
</dbReference>
<dbReference type="PRINTS" id="PR00474">
    <property type="entry name" value="GLU5KINASE"/>
</dbReference>
<dbReference type="SUPFAM" id="SSF53633">
    <property type="entry name" value="Carbamate kinase-like"/>
    <property type="match status" value="1"/>
</dbReference>